<gene>
    <name type="primary">pyrD</name>
    <name type="ordered locus">HP_1011</name>
</gene>
<name>PYRD_HELPY</name>
<sequence length="351" mass="39002">MLYSLVKKYLFSLDAEDAHEKVCKILRMLSSSPFLCNLIDSQWGYQNPKLENEILGLHFPNPLGLAAGFDKNASMLRALMAFGFGYLEAGTLTNEAQVGNERPRLFRHIEEESLQNAMGFNNYGAILGVRSFKRFAPYKTPIGINLGKNKHIEQAHALEDYKAVLSKCLNIGDYYTFNLSSPNTPNLRDLQNKAFVHELFCMAKEMTHKPLFLKIAPDLETDDMLEIVNSAIGAGAHGIIATNTTIDKSLVFAPKEMGGLSGKCLTKKSREIFKELAKAFFNKSVLVSVGGISDAKEAYERIKMGASLLQIYSAFIYNGPNLCQNILKDLVKLLQKDGFLSVKEAIGADLR</sequence>
<organism>
    <name type="scientific">Helicobacter pylori (strain ATCC 700392 / 26695)</name>
    <name type="common">Campylobacter pylori</name>
    <dbReference type="NCBI Taxonomy" id="85962"/>
    <lineage>
        <taxon>Bacteria</taxon>
        <taxon>Pseudomonadati</taxon>
        <taxon>Campylobacterota</taxon>
        <taxon>Epsilonproteobacteria</taxon>
        <taxon>Campylobacterales</taxon>
        <taxon>Helicobacteraceae</taxon>
        <taxon>Helicobacter</taxon>
    </lineage>
</organism>
<accession>O25655</accession>
<proteinExistence type="inferred from homology"/>
<protein>
    <recommendedName>
        <fullName>Dihydroorotate dehydrogenase (quinone)</fullName>
        <ecNumber>1.3.5.2</ecNumber>
    </recommendedName>
    <alternativeName>
        <fullName>DHOdehase</fullName>
        <shortName>DHOD</shortName>
        <shortName>DHODase</shortName>
    </alternativeName>
    <alternativeName>
        <fullName>Dihydroorotate oxidase</fullName>
    </alternativeName>
</protein>
<reference key="1">
    <citation type="journal article" date="1997" name="Nature">
        <title>The complete genome sequence of the gastric pathogen Helicobacter pylori.</title>
        <authorList>
            <person name="Tomb J.-F."/>
            <person name="White O."/>
            <person name="Kerlavage A.R."/>
            <person name="Clayton R.A."/>
            <person name="Sutton G.G."/>
            <person name="Fleischmann R.D."/>
            <person name="Ketchum K.A."/>
            <person name="Klenk H.-P."/>
            <person name="Gill S.R."/>
            <person name="Dougherty B.A."/>
            <person name="Nelson K.E."/>
            <person name="Quackenbush J."/>
            <person name="Zhou L."/>
            <person name="Kirkness E.F."/>
            <person name="Peterson S.N."/>
            <person name="Loftus B.J."/>
            <person name="Richardson D.L."/>
            <person name="Dodson R.J."/>
            <person name="Khalak H.G."/>
            <person name="Glodek A."/>
            <person name="McKenney K."/>
            <person name="FitzGerald L.M."/>
            <person name="Lee N."/>
            <person name="Adams M.D."/>
            <person name="Hickey E.K."/>
            <person name="Berg D.E."/>
            <person name="Gocayne J.D."/>
            <person name="Utterback T.R."/>
            <person name="Peterson J.D."/>
            <person name="Kelley J.M."/>
            <person name="Cotton M.D."/>
            <person name="Weidman J.F."/>
            <person name="Fujii C."/>
            <person name="Bowman C."/>
            <person name="Watthey L."/>
            <person name="Wallin E."/>
            <person name="Hayes W.S."/>
            <person name="Borodovsky M."/>
            <person name="Karp P.D."/>
            <person name="Smith H.O."/>
            <person name="Fraser C.M."/>
            <person name="Venter J.C."/>
        </authorList>
    </citation>
    <scope>NUCLEOTIDE SEQUENCE [LARGE SCALE GENOMIC DNA]</scope>
    <source>
        <strain>ATCC 700392 / 26695</strain>
    </source>
</reference>
<feature type="chain" id="PRO_0000148445" description="Dihydroorotate dehydrogenase (quinone)">
    <location>
        <begin position="1"/>
        <end position="351"/>
    </location>
</feature>
<feature type="active site" description="Nucleophile" evidence="1">
    <location>
        <position position="181"/>
    </location>
</feature>
<feature type="binding site" evidence="1">
    <location>
        <begin position="67"/>
        <end position="71"/>
    </location>
    <ligand>
        <name>FMN</name>
        <dbReference type="ChEBI" id="CHEBI:58210"/>
    </ligand>
</feature>
<feature type="binding site" evidence="1">
    <location>
        <position position="71"/>
    </location>
    <ligand>
        <name>substrate</name>
    </ligand>
</feature>
<feature type="binding site" evidence="1">
    <location>
        <position position="91"/>
    </location>
    <ligand>
        <name>FMN</name>
        <dbReference type="ChEBI" id="CHEBI:58210"/>
    </ligand>
</feature>
<feature type="binding site" evidence="1">
    <location>
        <begin position="116"/>
        <end position="120"/>
    </location>
    <ligand>
        <name>substrate</name>
    </ligand>
</feature>
<feature type="binding site" evidence="1">
    <location>
        <position position="145"/>
    </location>
    <ligand>
        <name>FMN</name>
        <dbReference type="ChEBI" id="CHEBI:58210"/>
    </ligand>
</feature>
<feature type="binding site" evidence="1">
    <location>
        <position position="178"/>
    </location>
    <ligand>
        <name>FMN</name>
        <dbReference type="ChEBI" id="CHEBI:58210"/>
    </ligand>
</feature>
<feature type="binding site" evidence="1">
    <location>
        <position position="178"/>
    </location>
    <ligand>
        <name>substrate</name>
    </ligand>
</feature>
<feature type="binding site" evidence="1">
    <location>
        <position position="183"/>
    </location>
    <ligand>
        <name>substrate</name>
    </ligand>
</feature>
<feature type="binding site" evidence="1">
    <location>
        <position position="214"/>
    </location>
    <ligand>
        <name>FMN</name>
        <dbReference type="ChEBI" id="CHEBI:58210"/>
    </ligand>
</feature>
<feature type="binding site" evidence="1">
    <location>
        <position position="242"/>
    </location>
    <ligand>
        <name>FMN</name>
        <dbReference type="ChEBI" id="CHEBI:58210"/>
    </ligand>
</feature>
<feature type="binding site" evidence="1">
    <location>
        <begin position="243"/>
        <end position="244"/>
    </location>
    <ligand>
        <name>substrate</name>
    </ligand>
</feature>
<feature type="binding site" evidence="1">
    <location>
        <position position="262"/>
    </location>
    <ligand>
        <name>FMN</name>
        <dbReference type="ChEBI" id="CHEBI:58210"/>
    </ligand>
</feature>
<feature type="binding site" evidence="1">
    <location>
        <position position="291"/>
    </location>
    <ligand>
        <name>FMN</name>
        <dbReference type="ChEBI" id="CHEBI:58210"/>
    </ligand>
</feature>
<feature type="binding site" evidence="1">
    <location>
        <begin position="312"/>
        <end position="313"/>
    </location>
    <ligand>
        <name>FMN</name>
        <dbReference type="ChEBI" id="CHEBI:58210"/>
    </ligand>
</feature>
<comment type="function">
    <text evidence="1">Catalyzes the conversion of dihydroorotate to orotate with quinone as electron acceptor.</text>
</comment>
<comment type="catalytic activity">
    <reaction>
        <text>(S)-dihydroorotate + a quinone = orotate + a quinol</text>
        <dbReference type="Rhea" id="RHEA:30187"/>
        <dbReference type="ChEBI" id="CHEBI:24646"/>
        <dbReference type="ChEBI" id="CHEBI:30839"/>
        <dbReference type="ChEBI" id="CHEBI:30864"/>
        <dbReference type="ChEBI" id="CHEBI:132124"/>
        <dbReference type="EC" id="1.3.5.2"/>
    </reaction>
</comment>
<comment type="cofactor">
    <cofactor evidence="1">
        <name>FMN</name>
        <dbReference type="ChEBI" id="CHEBI:58210"/>
    </cofactor>
    <text evidence="1">Binds 1 FMN per subunit.</text>
</comment>
<comment type="pathway">
    <text>Pyrimidine metabolism; UMP biosynthesis via de novo pathway; orotate from (S)-dihydroorotate (quinone route): step 1/1.</text>
</comment>
<comment type="subunit">
    <text evidence="1">Monomer.</text>
</comment>
<comment type="subcellular location">
    <subcellularLocation>
        <location evidence="1">Cell membrane</location>
        <topology evidence="1">Peripheral membrane protein</topology>
    </subcellularLocation>
</comment>
<comment type="similarity">
    <text evidence="2">Belongs to the dihydroorotate dehydrogenase family. Type 2 subfamily.</text>
</comment>
<evidence type="ECO:0000250" key="1"/>
<evidence type="ECO:0000305" key="2"/>
<keyword id="KW-1003">Cell membrane</keyword>
<keyword id="KW-0285">Flavoprotein</keyword>
<keyword id="KW-0288">FMN</keyword>
<keyword id="KW-0472">Membrane</keyword>
<keyword id="KW-0560">Oxidoreductase</keyword>
<keyword id="KW-0665">Pyrimidine biosynthesis</keyword>
<keyword id="KW-1185">Reference proteome</keyword>
<dbReference type="EC" id="1.3.5.2"/>
<dbReference type="EMBL" id="AE000511">
    <property type="protein sequence ID" value="AAD08055.1"/>
    <property type="molecule type" value="Genomic_DNA"/>
</dbReference>
<dbReference type="PIR" id="C64646">
    <property type="entry name" value="C64646"/>
</dbReference>
<dbReference type="RefSeq" id="NP_207801.1">
    <property type="nucleotide sequence ID" value="NC_000915.1"/>
</dbReference>
<dbReference type="RefSeq" id="WP_000967190.1">
    <property type="nucleotide sequence ID" value="NC_018939.1"/>
</dbReference>
<dbReference type="SMR" id="O25655"/>
<dbReference type="FunCoup" id="O25655">
    <property type="interactions" value="311"/>
</dbReference>
<dbReference type="STRING" id="85962.HP_1011"/>
<dbReference type="PaxDb" id="85962-C694_05235"/>
<dbReference type="EnsemblBacteria" id="AAD08055">
    <property type="protein sequence ID" value="AAD08055"/>
    <property type="gene ID" value="HP_1011"/>
</dbReference>
<dbReference type="KEGG" id="heo:C694_05235"/>
<dbReference type="KEGG" id="hpy:HP_1011"/>
<dbReference type="PATRIC" id="fig|85962.47.peg.1090"/>
<dbReference type="eggNOG" id="COG0167">
    <property type="taxonomic scope" value="Bacteria"/>
</dbReference>
<dbReference type="InParanoid" id="O25655"/>
<dbReference type="OrthoDB" id="9802377at2"/>
<dbReference type="PhylomeDB" id="O25655"/>
<dbReference type="UniPathway" id="UPA00070">
    <property type="reaction ID" value="UER00946"/>
</dbReference>
<dbReference type="Proteomes" id="UP000000429">
    <property type="component" value="Chromosome"/>
</dbReference>
<dbReference type="GO" id="GO:0005737">
    <property type="term" value="C:cytoplasm"/>
    <property type="evidence" value="ECO:0007669"/>
    <property type="project" value="InterPro"/>
</dbReference>
<dbReference type="GO" id="GO:0005886">
    <property type="term" value="C:plasma membrane"/>
    <property type="evidence" value="ECO:0007669"/>
    <property type="project" value="UniProtKB-SubCell"/>
</dbReference>
<dbReference type="GO" id="GO:0106430">
    <property type="term" value="F:dihydroorotate dehydrogenase (quinone) activity"/>
    <property type="evidence" value="ECO:0007669"/>
    <property type="project" value="UniProtKB-EC"/>
</dbReference>
<dbReference type="GO" id="GO:0004152">
    <property type="term" value="F:dihydroorotate dehydrogenase activity"/>
    <property type="evidence" value="ECO:0000318"/>
    <property type="project" value="GO_Central"/>
</dbReference>
<dbReference type="GO" id="GO:0006207">
    <property type="term" value="P:'de novo' pyrimidine nucleobase biosynthetic process"/>
    <property type="evidence" value="ECO:0000318"/>
    <property type="project" value="GO_Central"/>
</dbReference>
<dbReference type="GO" id="GO:0044205">
    <property type="term" value="P:'de novo' UMP biosynthetic process"/>
    <property type="evidence" value="ECO:0007669"/>
    <property type="project" value="UniProtKB-UniRule"/>
</dbReference>
<dbReference type="GO" id="GO:0009220">
    <property type="term" value="P:pyrimidine ribonucleotide biosynthetic process"/>
    <property type="evidence" value="ECO:0000318"/>
    <property type="project" value="GO_Central"/>
</dbReference>
<dbReference type="CDD" id="cd04738">
    <property type="entry name" value="DHOD_2_like"/>
    <property type="match status" value="1"/>
</dbReference>
<dbReference type="FunFam" id="3.20.20.70:FF:000319">
    <property type="entry name" value="Dihydroorotate dehydrogenase (quinone)"/>
    <property type="match status" value="1"/>
</dbReference>
<dbReference type="Gene3D" id="3.20.20.70">
    <property type="entry name" value="Aldolase class I"/>
    <property type="match status" value="1"/>
</dbReference>
<dbReference type="HAMAP" id="MF_00225">
    <property type="entry name" value="DHO_dh_type2"/>
    <property type="match status" value="1"/>
</dbReference>
<dbReference type="InterPro" id="IPR013785">
    <property type="entry name" value="Aldolase_TIM"/>
</dbReference>
<dbReference type="InterPro" id="IPR050074">
    <property type="entry name" value="DHO_dehydrogenase"/>
</dbReference>
<dbReference type="InterPro" id="IPR012135">
    <property type="entry name" value="Dihydroorotate_DH_1_2"/>
</dbReference>
<dbReference type="InterPro" id="IPR005719">
    <property type="entry name" value="Dihydroorotate_DH_2"/>
</dbReference>
<dbReference type="InterPro" id="IPR005720">
    <property type="entry name" value="Dihydroorotate_DH_cat"/>
</dbReference>
<dbReference type="InterPro" id="IPR001295">
    <property type="entry name" value="Dihydroorotate_DH_CS"/>
</dbReference>
<dbReference type="NCBIfam" id="NF003649">
    <property type="entry name" value="PRK05286.2-2"/>
    <property type="match status" value="1"/>
</dbReference>
<dbReference type="NCBIfam" id="NF003652">
    <property type="entry name" value="PRK05286.2-5"/>
    <property type="match status" value="1"/>
</dbReference>
<dbReference type="NCBIfam" id="TIGR01036">
    <property type="entry name" value="pyrD_sub2"/>
    <property type="match status" value="1"/>
</dbReference>
<dbReference type="PANTHER" id="PTHR48109:SF4">
    <property type="entry name" value="DIHYDROOROTATE DEHYDROGENASE (QUINONE), MITOCHONDRIAL"/>
    <property type="match status" value="1"/>
</dbReference>
<dbReference type="PANTHER" id="PTHR48109">
    <property type="entry name" value="DIHYDROOROTATE DEHYDROGENASE (QUINONE), MITOCHONDRIAL-RELATED"/>
    <property type="match status" value="1"/>
</dbReference>
<dbReference type="Pfam" id="PF01180">
    <property type="entry name" value="DHO_dh"/>
    <property type="match status" value="1"/>
</dbReference>
<dbReference type="PIRSF" id="PIRSF000164">
    <property type="entry name" value="DHO_oxidase"/>
    <property type="match status" value="1"/>
</dbReference>
<dbReference type="SUPFAM" id="SSF51395">
    <property type="entry name" value="FMN-linked oxidoreductases"/>
    <property type="match status" value="1"/>
</dbReference>
<dbReference type="PROSITE" id="PS00911">
    <property type="entry name" value="DHODEHASE_1"/>
    <property type="match status" value="1"/>
</dbReference>
<dbReference type="PROSITE" id="PS00912">
    <property type="entry name" value="DHODEHASE_2"/>
    <property type="match status" value="1"/>
</dbReference>